<comment type="catalytic activity">
    <reaction>
        <text>L-homoserine + NADP(+) = L-aspartate 4-semialdehyde + NADPH + H(+)</text>
        <dbReference type="Rhea" id="RHEA:15761"/>
        <dbReference type="ChEBI" id="CHEBI:15378"/>
        <dbReference type="ChEBI" id="CHEBI:57476"/>
        <dbReference type="ChEBI" id="CHEBI:57783"/>
        <dbReference type="ChEBI" id="CHEBI:58349"/>
        <dbReference type="ChEBI" id="CHEBI:537519"/>
        <dbReference type="EC" id="1.1.1.3"/>
    </reaction>
</comment>
<comment type="catalytic activity">
    <reaction>
        <text>L-homoserine + NAD(+) = L-aspartate 4-semialdehyde + NADH + H(+)</text>
        <dbReference type="Rhea" id="RHEA:15757"/>
        <dbReference type="ChEBI" id="CHEBI:15378"/>
        <dbReference type="ChEBI" id="CHEBI:57476"/>
        <dbReference type="ChEBI" id="CHEBI:57540"/>
        <dbReference type="ChEBI" id="CHEBI:57945"/>
        <dbReference type="ChEBI" id="CHEBI:537519"/>
        <dbReference type="EC" id="1.1.1.3"/>
    </reaction>
</comment>
<comment type="pathway">
    <text>Amino-acid biosynthesis; L-methionine biosynthesis via de novo pathway; L-homoserine from L-aspartate: step 3/3.</text>
</comment>
<comment type="pathway">
    <text>Amino-acid biosynthesis; L-threonine biosynthesis; L-threonine from L-aspartate: step 3/5.</text>
</comment>
<comment type="similarity">
    <text evidence="4">Belongs to the homoserine dehydrogenase family.</text>
</comment>
<organism>
    <name type="scientific">Methylobacillus glycogenes</name>
    <dbReference type="NCBI Taxonomy" id="406"/>
    <lineage>
        <taxon>Bacteria</taxon>
        <taxon>Pseudomonadati</taxon>
        <taxon>Pseudomonadota</taxon>
        <taxon>Betaproteobacteria</taxon>
        <taxon>Nitrosomonadales</taxon>
        <taxon>Methylophilaceae</taxon>
        <taxon>Methylobacillus</taxon>
    </lineage>
</organism>
<protein>
    <recommendedName>
        <fullName>Homoserine dehydrogenase</fullName>
        <shortName>HDH</shortName>
        <ecNumber>1.1.1.3</ecNumber>
    </recommendedName>
</protein>
<dbReference type="EC" id="1.1.1.3"/>
<dbReference type="EMBL" id="D14071">
    <property type="protein sequence ID" value="BAA40415.1"/>
    <property type="molecule type" value="Genomic_DNA"/>
</dbReference>
<dbReference type="SMR" id="P37144"/>
<dbReference type="UniPathway" id="UPA00050">
    <property type="reaction ID" value="UER00063"/>
</dbReference>
<dbReference type="UniPathway" id="UPA00051">
    <property type="reaction ID" value="UER00465"/>
</dbReference>
<dbReference type="GO" id="GO:0004412">
    <property type="term" value="F:homoserine dehydrogenase activity"/>
    <property type="evidence" value="ECO:0007669"/>
    <property type="project" value="UniProtKB-EC"/>
</dbReference>
<dbReference type="GO" id="GO:0050661">
    <property type="term" value="F:NADP binding"/>
    <property type="evidence" value="ECO:0007669"/>
    <property type="project" value="InterPro"/>
</dbReference>
<dbReference type="GO" id="GO:0009097">
    <property type="term" value="P:isoleucine biosynthetic process"/>
    <property type="evidence" value="ECO:0007669"/>
    <property type="project" value="UniProtKB-KW"/>
</dbReference>
<dbReference type="GO" id="GO:0009086">
    <property type="term" value="P:methionine biosynthetic process"/>
    <property type="evidence" value="ECO:0007669"/>
    <property type="project" value="UniProtKB-KW"/>
</dbReference>
<dbReference type="GO" id="GO:0009088">
    <property type="term" value="P:threonine biosynthetic process"/>
    <property type="evidence" value="ECO:0007669"/>
    <property type="project" value="UniProtKB-UniPathway"/>
</dbReference>
<dbReference type="CDD" id="cd04881">
    <property type="entry name" value="ACT_HSDH-Hom"/>
    <property type="match status" value="1"/>
</dbReference>
<dbReference type="FunFam" id="3.30.360.10:FF:000005">
    <property type="entry name" value="Homoserine dehydrogenase"/>
    <property type="match status" value="1"/>
</dbReference>
<dbReference type="FunFam" id="3.30.70.260:FF:000030">
    <property type="entry name" value="Homoserine dehydrogenase"/>
    <property type="match status" value="1"/>
</dbReference>
<dbReference type="Gene3D" id="3.30.70.260">
    <property type="match status" value="1"/>
</dbReference>
<dbReference type="Gene3D" id="3.30.360.10">
    <property type="entry name" value="Dihydrodipicolinate Reductase, domain 2"/>
    <property type="match status" value="1"/>
</dbReference>
<dbReference type="Gene3D" id="3.40.50.720">
    <property type="entry name" value="NAD(P)-binding Rossmann-like Domain"/>
    <property type="match status" value="1"/>
</dbReference>
<dbReference type="InterPro" id="IPR045865">
    <property type="entry name" value="ACT-like_dom_sf"/>
</dbReference>
<dbReference type="InterPro" id="IPR002912">
    <property type="entry name" value="ACT_dom"/>
</dbReference>
<dbReference type="InterPro" id="IPR005106">
    <property type="entry name" value="Asp/hSer_DH_NAD-bd"/>
</dbReference>
<dbReference type="InterPro" id="IPR016204">
    <property type="entry name" value="HDH"/>
</dbReference>
<dbReference type="InterPro" id="IPR001342">
    <property type="entry name" value="HDH_cat"/>
</dbReference>
<dbReference type="InterPro" id="IPR019811">
    <property type="entry name" value="HDH_CS"/>
</dbReference>
<dbReference type="InterPro" id="IPR036291">
    <property type="entry name" value="NAD(P)-bd_dom_sf"/>
</dbReference>
<dbReference type="NCBIfam" id="NF004976">
    <property type="entry name" value="PRK06349.1"/>
    <property type="match status" value="1"/>
</dbReference>
<dbReference type="PANTHER" id="PTHR43331">
    <property type="entry name" value="HOMOSERINE DEHYDROGENASE"/>
    <property type="match status" value="1"/>
</dbReference>
<dbReference type="PANTHER" id="PTHR43331:SF1">
    <property type="entry name" value="HOMOSERINE DEHYDROGENASE"/>
    <property type="match status" value="1"/>
</dbReference>
<dbReference type="Pfam" id="PF01842">
    <property type="entry name" value="ACT"/>
    <property type="match status" value="1"/>
</dbReference>
<dbReference type="Pfam" id="PF00742">
    <property type="entry name" value="Homoserine_dh"/>
    <property type="match status" value="1"/>
</dbReference>
<dbReference type="Pfam" id="PF03447">
    <property type="entry name" value="NAD_binding_3"/>
    <property type="match status" value="1"/>
</dbReference>
<dbReference type="PIRSF" id="PIRSF000098">
    <property type="entry name" value="Homoser_dehydrog"/>
    <property type="match status" value="1"/>
</dbReference>
<dbReference type="SUPFAM" id="SSF55021">
    <property type="entry name" value="ACT-like"/>
    <property type="match status" value="1"/>
</dbReference>
<dbReference type="SUPFAM" id="SSF55347">
    <property type="entry name" value="Glyceraldehyde-3-phosphate dehydrogenase-like, C-terminal domain"/>
    <property type="match status" value="1"/>
</dbReference>
<dbReference type="SUPFAM" id="SSF51735">
    <property type="entry name" value="NAD(P)-binding Rossmann-fold domains"/>
    <property type="match status" value="1"/>
</dbReference>
<dbReference type="PROSITE" id="PS51671">
    <property type="entry name" value="ACT"/>
    <property type="match status" value="1"/>
</dbReference>
<dbReference type="PROSITE" id="PS01042">
    <property type="entry name" value="HOMOSER_DHGENASE"/>
    <property type="match status" value="1"/>
</dbReference>
<gene>
    <name type="primary">hom</name>
</gene>
<proteinExistence type="inferred from homology"/>
<name>DHON_METGL</name>
<accession>P37144</accession>
<keyword id="KW-0028">Amino-acid biosynthesis</keyword>
<keyword id="KW-0100">Branched-chain amino acid biosynthesis</keyword>
<keyword id="KW-0412">Isoleucine biosynthesis</keyword>
<keyword id="KW-0486">Methionine biosynthesis</keyword>
<keyword id="KW-0521">NADP</keyword>
<keyword id="KW-0560">Oxidoreductase</keyword>
<keyword id="KW-0791">Threonine biosynthesis</keyword>
<reference key="1">
    <citation type="journal article" date="1994" name="Appl. Environ. Microbiol.">
        <title>Cloning and nucleotide sequences of the homoserine dehydrogenase genes (hom) and the threonine synthase genes (thrC) of the Gram-negative obligate methylotroph Methylobacillus glycogenes.</title>
        <authorList>
            <person name="Motoyama H."/>
            <person name="Maki K."/>
            <person name="Anazawa H."/>
            <person name="Ishino S."/>
            <person name="Teshiba S."/>
        </authorList>
    </citation>
    <scope>NUCLEOTIDE SEQUENCE [GENOMIC DNA]</scope>
    <source>
        <strain>ATCC 21371 / DSM 1760 / JCM 2853 / NCIMB 1210 / M 135-7</strain>
    </source>
</reference>
<feature type="chain" id="PRO_0000066699" description="Homoserine dehydrogenase">
    <location>
        <begin position="1"/>
        <end position="412"/>
    </location>
</feature>
<feature type="domain" description="ACT" evidence="3">
    <location>
        <begin position="330"/>
        <end position="407"/>
    </location>
</feature>
<feature type="active site" description="Proton donor" evidence="2">
    <location>
        <position position="205"/>
    </location>
</feature>
<feature type="binding site" evidence="1">
    <location>
        <begin position="9"/>
        <end position="16"/>
    </location>
    <ligand>
        <name>NADP(+)</name>
        <dbReference type="ChEBI" id="CHEBI:58349"/>
    </ligand>
</feature>
<feature type="binding site" evidence="1">
    <location>
        <position position="105"/>
    </location>
    <ligand>
        <name>NADP(+)</name>
        <dbReference type="ChEBI" id="CHEBI:58349"/>
    </ligand>
</feature>
<feature type="binding site" evidence="1">
    <location>
        <position position="190"/>
    </location>
    <ligand>
        <name>substrate</name>
    </ligand>
</feature>
<sequence length="412" mass="44818">MKPINVGLLGIGTVGGGTYTVLTRNQEEIARRAGRPIAITRVADRNLELARQVTGGKIDVTDDAFAIVSDPAIDIVVELIGGYTVARELVLKAIENGKHVVTANKALIACMAMKFLPLRRKKASSSLLKLPLLVVSPLFKAVREGLAANRIEWIAGIINGTTNFILSEMREKGLAFADVLKEAQRLGYAEADPTFDVEGIDAAHKLMILAAMLWLFVHSLCRGITKLDAVDITKRTDKGVELRVHPTLIPEKRLICQCEWRNECCAGQGRCCWPTLYYGAGAGAEPTASAVADLVDGTDRGISCPHLAFQPDRLVDLPILPIGEISSAYYLRLRAVDKPGVLADVTRILGDRQISIDAMIQKEPQEGEDQADIIILTHVTVEKNMDDAIAAIEALPAISGKVTRLRMEELSR</sequence>
<evidence type="ECO:0000250" key="1"/>
<evidence type="ECO:0000255" key="2"/>
<evidence type="ECO:0000255" key="3">
    <source>
        <dbReference type="PROSITE-ProRule" id="PRU01007"/>
    </source>
</evidence>
<evidence type="ECO:0000305" key="4"/>